<feature type="chain" id="PRO_1000046848" description="Cobalt-precorrin-5B C(1)-methyltransferase">
    <location>
        <begin position="1"/>
        <end position="376"/>
    </location>
</feature>
<keyword id="KW-0169">Cobalamin biosynthesis</keyword>
<keyword id="KW-0489">Methyltransferase</keyword>
<keyword id="KW-1185">Reference proteome</keyword>
<keyword id="KW-0949">S-adenosyl-L-methionine</keyword>
<keyword id="KW-0808">Transferase</keyword>
<sequence length="376" mass="38755">MTETADPLNRPLKRGWTTGSCATAAARAAYELLMTGSCPAIVDIALPGGRRASFAVAIHEAEGGRATAGVVKDAGDDPDVTHGALIKATVQRRDAGSGIAFRAGSGVGTVTRPGLPLPPGEPAINPVPREMIIAAIDEAATALGGTRDVTVEIAIPGGEDLAKKTLNPRLGIVGGLSILGTTGIVVPFSCAAWIHSIYRGIDVARAAGLPHIAGATGSTSEKAVQQLYGLPDTALIDMGDFAGGMLKYLRRHPVGRVTVAGGFAKMTKLGQGLLDLHSRAGEVDLGWLATALHDAGAPPELVETARTANTALQVLQESDRSGFPAGDVVARAAWQTAYRALANDAVALDVAVFDRDGRLVGRCLGADHSPLPRNRR</sequence>
<accession>A5EGH4</accession>
<dbReference type="EC" id="2.1.1.195" evidence="1"/>
<dbReference type="EMBL" id="CP000494">
    <property type="protein sequence ID" value="ABQ35268.1"/>
    <property type="molecule type" value="Genomic_DNA"/>
</dbReference>
<dbReference type="RefSeq" id="WP_012043286.1">
    <property type="nucleotide sequence ID" value="NC_009485.1"/>
</dbReference>
<dbReference type="SMR" id="A5EGH4"/>
<dbReference type="STRING" id="288000.BBta_3153"/>
<dbReference type="KEGG" id="bbt:BBta_3153"/>
<dbReference type="eggNOG" id="COG1903">
    <property type="taxonomic scope" value="Bacteria"/>
</dbReference>
<dbReference type="HOGENOM" id="CLU_041273_0_0_5"/>
<dbReference type="OrthoDB" id="6439987at2"/>
<dbReference type="UniPathway" id="UPA00148">
    <property type="reaction ID" value="UER00227"/>
</dbReference>
<dbReference type="Proteomes" id="UP000000246">
    <property type="component" value="Chromosome"/>
</dbReference>
<dbReference type="GO" id="GO:0043780">
    <property type="term" value="F:cobalt-precorrin-5B C1-methyltransferase activity"/>
    <property type="evidence" value="ECO:0007669"/>
    <property type="project" value="RHEA"/>
</dbReference>
<dbReference type="GO" id="GO:0019251">
    <property type="term" value="P:anaerobic cobalamin biosynthetic process"/>
    <property type="evidence" value="ECO:0007669"/>
    <property type="project" value="UniProtKB-UniRule"/>
</dbReference>
<dbReference type="GO" id="GO:0032259">
    <property type="term" value="P:methylation"/>
    <property type="evidence" value="ECO:0007669"/>
    <property type="project" value="UniProtKB-KW"/>
</dbReference>
<dbReference type="Gene3D" id="3.30.2110.10">
    <property type="entry name" value="CbiD-like"/>
    <property type="match status" value="1"/>
</dbReference>
<dbReference type="HAMAP" id="MF_00787">
    <property type="entry name" value="CbiD"/>
    <property type="match status" value="1"/>
</dbReference>
<dbReference type="InterPro" id="IPR002748">
    <property type="entry name" value="CbiD"/>
</dbReference>
<dbReference type="InterPro" id="IPR036074">
    <property type="entry name" value="CbiD_sf"/>
</dbReference>
<dbReference type="NCBIfam" id="TIGR00312">
    <property type="entry name" value="cbiD"/>
    <property type="match status" value="1"/>
</dbReference>
<dbReference type="NCBIfam" id="NF000849">
    <property type="entry name" value="PRK00075.1-1"/>
    <property type="match status" value="1"/>
</dbReference>
<dbReference type="PANTHER" id="PTHR35863">
    <property type="entry name" value="COBALT-PRECORRIN-5B C(1)-METHYLTRANSFERASE"/>
    <property type="match status" value="1"/>
</dbReference>
<dbReference type="PANTHER" id="PTHR35863:SF1">
    <property type="entry name" value="COBALT-PRECORRIN-5B C(1)-METHYLTRANSFERASE"/>
    <property type="match status" value="1"/>
</dbReference>
<dbReference type="Pfam" id="PF01888">
    <property type="entry name" value="CbiD"/>
    <property type="match status" value="1"/>
</dbReference>
<dbReference type="PIRSF" id="PIRSF026782">
    <property type="entry name" value="CbiD"/>
    <property type="match status" value="1"/>
</dbReference>
<dbReference type="SUPFAM" id="SSF111342">
    <property type="entry name" value="CbiD-like"/>
    <property type="match status" value="1"/>
</dbReference>
<reference key="1">
    <citation type="journal article" date="2007" name="Science">
        <title>Legumes symbioses: absence of nod genes in photosynthetic bradyrhizobia.</title>
        <authorList>
            <person name="Giraud E."/>
            <person name="Moulin L."/>
            <person name="Vallenet D."/>
            <person name="Barbe V."/>
            <person name="Cytryn E."/>
            <person name="Avarre J.-C."/>
            <person name="Jaubert M."/>
            <person name="Simon D."/>
            <person name="Cartieaux F."/>
            <person name="Prin Y."/>
            <person name="Bena G."/>
            <person name="Hannibal L."/>
            <person name="Fardoux J."/>
            <person name="Kojadinovic M."/>
            <person name="Vuillet L."/>
            <person name="Lajus A."/>
            <person name="Cruveiller S."/>
            <person name="Rouy Z."/>
            <person name="Mangenot S."/>
            <person name="Segurens B."/>
            <person name="Dossat C."/>
            <person name="Franck W.L."/>
            <person name="Chang W.-S."/>
            <person name="Saunders E."/>
            <person name="Bruce D."/>
            <person name="Richardson P."/>
            <person name="Normand P."/>
            <person name="Dreyfus B."/>
            <person name="Pignol D."/>
            <person name="Stacey G."/>
            <person name="Emerich D."/>
            <person name="Vermeglio A."/>
            <person name="Medigue C."/>
            <person name="Sadowsky M."/>
        </authorList>
    </citation>
    <scope>NUCLEOTIDE SEQUENCE [LARGE SCALE GENOMIC DNA]</scope>
    <source>
        <strain>BTAi1 / ATCC BAA-1182</strain>
    </source>
</reference>
<organism>
    <name type="scientific">Bradyrhizobium sp. (strain BTAi1 / ATCC BAA-1182)</name>
    <dbReference type="NCBI Taxonomy" id="288000"/>
    <lineage>
        <taxon>Bacteria</taxon>
        <taxon>Pseudomonadati</taxon>
        <taxon>Pseudomonadota</taxon>
        <taxon>Alphaproteobacteria</taxon>
        <taxon>Hyphomicrobiales</taxon>
        <taxon>Nitrobacteraceae</taxon>
        <taxon>Bradyrhizobium</taxon>
    </lineage>
</organism>
<name>CBID_BRASB</name>
<proteinExistence type="inferred from homology"/>
<gene>
    <name evidence="1" type="primary">cbiD</name>
    <name type="ordered locus">BBta_3153</name>
</gene>
<evidence type="ECO:0000255" key="1">
    <source>
        <dbReference type="HAMAP-Rule" id="MF_00787"/>
    </source>
</evidence>
<comment type="function">
    <text evidence="1">Catalyzes the methylation of C-1 in cobalt-precorrin-5B to form cobalt-precorrin-6A.</text>
</comment>
<comment type="catalytic activity">
    <reaction evidence="1">
        <text>Co-precorrin-5B + S-adenosyl-L-methionine = Co-precorrin-6A + S-adenosyl-L-homocysteine</text>
        <dbReference type="Rhea" id="RHEA:26285"/>
        <dbReference type="ChEBI" id="CHEBI:57856"/>
        <dbReference type="ChEBI" id="CHEBI:59789"/>
        <dbReference type="ChEBI" id="CHEBI:60063"/>
        <dbReference type="ChEBI" id="CHEBI:60064"/>
        <dbReference type="EC" id="2.1.1.195"/>
    </reaction>
</comment>
<comment type="pathway">
    <text evidence="1">Cofactor biosynthesis; adenosylcobalamin biosynthesis; cob(II)yrinate a,c-diamide from sirohydrochlorin (anaerobic route): step 6/10.</text>
</comment>
<comment type="similarity">
    <text evidence="1">Belongs to the CbiD family.</text>
</comment>
<protein>
    <recommendedName>
        <fullName evidence="1">Cobalt-precorrin-5B C(1)-methyltransferase</fullName>
        <ecNumber evidence="1">2.1.1.195</ecNumber>
    </recommendedName>
    <alternativeName>
        <fullName evidence="1">Cobalt-precorrin-6A synthase</fullName>
    </alternativeName>
</protein>